<keyword id="KW-0963">Cytoplasm</keyword>
<keyword id="KW-0378">Hydrolase</keyword>
<sequence>MQLTPREVEKLMIYTLSDVAFKRKARGLKLNYPEAVSIITVTAMEGARDGKSVEDVMKEASKVLTKDDVMDGVADLIPNVQVEAIFTDGSRLVTVHDPIK</sequence>
<dbReference type="EC" id="3.5.1.5" evidence="1"/>
<dbReference type="EMBL" id="AY363681">
    <property type="protein sequence ID" value="AAR15092.1"/>
    <property type="molecule type" value="Genomic_DNA"/>
</dbReference>
<dbReference type="RefSeq" id="WP_002215288.1">
    <property type="nucleotide sequence ID" value="NZ_PEHN01000005.1"/>
</dbReference>
<dbReference type="SMR" id="Q6UR78"/>
<dbReference type="UniPathway" id="UPA00258">
    <property type="reaction ID" value="UER00370"/>
</dbReference>
<dbReference type="GO" id="GO:0005737">
    <property type="term" value="C:cytoplasm"/>
    <property type="evidence" value="ECO:0007669"/>
    <property type="project" value="UniProtKB-SubCell"/>
</dbReference>
<dbReference type="GO" id="GO:0016151">
    <property type="term" value="F:nickel cation binding"/>
    <property type="evidence" value="ECO:0007669"/>
    <property type="project" value="InterPro"/>
</dbReference>
<dbReference type="GO" id="GO:0009039">
    <property type="term" value="F:urease activity"/>
    <property type="evidence" value="ECO:0007669"/>
    <property type="project" value="UniProtKB-UniRule"/>
</dbReference>
<dbReference type="GO" id="GO:0043419">
    <property type="term" value="P:urea catabolic process"/>
    <property type="evidence" value="ECO:0007669"/>
    <property type="project" value="UniProtKB-UniRule"/>
</dbReference>
<dbReference type="CDD" id="cd00390">
    <property type="entry name" value="Urease_gamma"/>
    <property type="match status" value="1"/>
</dbReference>
<dbReference type="Gene3D" id="3.30.280.10">
    <property type="entry name" value="Urease, gamma-like subunit"/>
    <property type="match status" value="1"/>
</dbReference>
<dbReference type="HAMAP" id="MF_00739">
    <property type="entry name" value="Urease_gamma"/>
    <property type="match status" value="1"/>
</dbReference>
<dbReference type="InterPro" id="IPR012010">
    <property type="entry name" value="Urease_gamma"/>
</dbReference>
<dbReference type="InterPro" id="IPR002026">
    <property type="entry name" value="Urease_gamma/gamma-beta_su"/>
</dbReference>
<dbReference type="InterPro" id="IPR036463">
    <property type="entry name" value="Urease_gamma_sf"/>
</dbReference>
<dbReference type="InterPro" id="IPR050069">
    <property type="entry name" value="Urease_subunit"/>
</dbReference>
<dbReference type="NCBIfam" id="NF009712">
    <property type="entry name" value="PRK13241.1"/>
    <property type="match status" value="1"/>
</dbReference>
<dbReference type="NCBIfam" id="TIGR00193">
    <property type="entry name" value="urease_gam"/>
    <property type="match status" value="1"/>
</dbReference>
<dbReference type="PANTHER" id="PTHR33569">
    <property type="entry name" value="UREASE"/>
    <property type="match status" value="1"/>
</dbReference>
<dbReference type="PANTHER" id="PTHR33569:SF1">
    <property type="entry name" value="UREASE"/>
    <property type="match status" value="1"/>
</dbReference>
<dbReference type="Pfam" id="PF00547">
    <property type="entry name" value="Urease_gamma"/>
    <property type="match status" value="1"/>
</dbReference>
<dbReference type="PIRSF" id="PIRSF001223">
    <property type="entry name" value="Urease_gamma"/>
    <property type="match status" value="1"/>
</dbReference>
<dbReference type="SUPFAM" id="SSF54111">
    <property type="entry name" value="Urease, gamma-subunit"/>
    <property type="match status" value="1"/>
</dbReference>
<protein>
    <recommendedName>
        <fullName evidence="1">Urease subunit gamma</fullName>
        <ecNumber evidence="1">3.5.1.5</ecNumber>
    </recommendedName>
    <alternativeName>
        <fullName evidence="1">Urea amidohydrolase subunit gamma</fullName>
    </alternativeName>
</protein>
<comment type="catalytic activity">
    <reaction evidence="1">
        <text>urea + 2 H2O + H(+) = hydrogencarbonate + 2 NH4(+)</text>
        <dbReference type="Rhea" id="RHEA:20557"/>
        <dbReference type="ChEBI" id="CHEBI:15377"/>
        <dbReference type="ChEBI" id="CHEBI:15378"/>
        <dbReference type="ChEBI" id="CHEBI:16199"/>
        <dbReference type="ChEBI" id="CHEBI:17544"/>
        <dbReference type="ChEBI" id="CHEBI:28938"/>
        <dbReference type="EC" id="3.5.1.5"/>
    </reaction>
</comment>
<comment type="pathway">
    <text evidence="1">Nitrogen metabolism; urea degradation; CO(2) and NH(3) from urea (urease route): step 1/1.</text>
</comment>
<comment type="subunit">
    <text evidence="1">Heterotrimer of UreA (gamma), UreB (beta) and UreC (alpha) subunits. Three heterotrimers associate to form the active enzyme.</text>
</comment>
<comment type="subcellular location">
    <subcellularLocation>
        <location evidence="1">Cytoplasm</location>
    </subcellularLocation>
</comment>
<comment type="similarity">
    <text evidence="1">Belongs to the urease gamma subunit family.</text>
</comment>
<evidence type="ECO:0000255" key="1">
    <source>
        <dbReference type="HAMAP-Rule" id="MF_00739"/>
    </source>
</evidence>
<proteinExistence type="inferred from homology"/>
<gene>
    <name evidence="1" type="primary">ureA</name>
</gene>
<reference key="1">
    <citation type="submission" date="2003-08" db="EMBL/GenBank/DDBJ databases">
        <title>Yersinia bercovieri urease gene locus (ureABCEFGD) and urea transporter gene (yut).</title>
        <authorList>
            <person name="Sebbane F."/>
            <person name="Lemaitre N."/>
            <person name="Simonet M."/>
        </authorList>
    </citation>
    <scope>NUCLEOTIDE SEQUENCE [GENOMIC DNA]</scope>
</reference>
<accession>Q6UR78</accession>
<name>URE3_YERBE</name>
<organism>
    <name type="scientific">Yersinia bercovieri</name>
    <dbReference type="NCBI Taxonomy" id="634"/>
    <lineage>
        <taxon>Bacteria</taxon>
        <taxon>Pseudomonadati</taxon>
        <taxon>Pseudomonadota</taxon>
        <taxon>Gammaproteobacteria</taxon>
        <taxon>Enterobacterales</taxon>
        <taxon>Yersiniaceae</taxon>
        <taxon>Yersinia</taxon>
    </lineage>
</organism>
<feature type="chain" id="PRO_0000098060" description="Urease subunit gamma">
    <location>
        <begin position="1"/>
        <end position="100"/>
    </location>
</feature>